<evidence type="ECO:0000255" key="1">
    <source>
        <dbReference type="HAMAP-Rule" id="MF_00682"/>
    </source>
</evidence>
<proteinExistence type="inferred from homology"/>
<name>HSCB_SHEDO</name>
<protein>
    <recommendedName>
        <fullName evidence="1">Co-chaperone protein HscB homolog</fullName>
    </recommendedName>
</protein>
<accession>Q12P80</accession>
<sequence>MNYFNLFNFTPSFDIDTGLLAERYRELQKAVHPDKFANDSEQQKLLAVQRTAQVNDGYHTLKQPLRRAEHLLSLGGVDLSHETTTIKDTVFLMQQMDWREALEDIKHSKQPQEQIDELYDSFSAHEKLLFSQLSHLLQTQDEVAYLKAADQVRKLKFMAKLQQELTNIEDALLD</sequence>
<reference key="1">
    <citation type="submission" date="2006-03" db="EMBL/GenBank/DDBJ databases">
        <title>Complete sequence of Shewanella denitrificans OS217.</title>
        <authorList>
            <consortium name="US DOE Joint Genome Institute"/>
            <person name="Copeland A."/>
            <person name="Lucas S."/>
            <person name="Lapidus A."/>
            <person name="Barry K."/>
            <person name="Detter J.C."/>
            <person name="Glavina del Rio T."/>
            <person name="Hammon N."/>
            <person name="Israni S."/>
            <person name="Dalin E."/>
            <person name="Tice H."/>
            <person name="Pitluck S."/>
            <person name="Brettin T."/>
            <person name="Bruce D."/>
            <person name="Han C."/>
            <person name="Tapia R."/>
            <person name="Gilna P."/>
            <person name="Kiss H."/>
            <person name="Schmutz J."/>
            <person name="Larimer F."/>
            <person name="Land M."/>
            <person name="Hauser L."/>
            <person name="Kyrpides N."/>
            <person name="Lykidis A."/>
            <person name="Richardson P."/>
        </authorList>
    </citation>
    <scope>NUCLEOTIDE SEQUENCE [LARGE SCALE GENOMIC DNA]</scope>
    <source>
        <strain>OS217 / ATCC BAA-1090 / DSM 15013</strain>
    </source>
</reference>
<comment type="function">
    <text evidence="1">Co-chaperone involved in the maturation of iron-sulfur cluster-containing proteins. Seems to help targeting proteins to be folded toward HscA.</text>
</comment>
<comment type="subunit">
    <text evidence="1">Interacts with HscA and stimulates its ATPase activity.</text>
</comment>
<comment type="similarity">
    <text evidence="1">Belongs to the HscB family.</text>
</comment>
<gene>
    <name evidence="1" type="primary">hscB</name>
    <name type="ordered locus">Sden_1461</name>
</gene>
<feature type="chain" id="PRO_1000083037" description="Co-chaperone protein HscB homolog">
    <location>
        <begin position="1"/>
        <end position="174"/>
    </location>
</feature>
<feature type="domain" description="J" evidence="1">
    <location>
        <begin position="2"/>
        <end position="74"/>
    </location>
</feature>
<organism>
    <name type="scientific">Shewanella denitrificans (strain OS217 / ATCC BAA-1090 / DSM 15013)</name>
    <dbReference type="NCBI Taxonomy" id="318161"/>
    <lineage>
        <taxon>Bacteria</taxon>
        <taxon>Pseudomonadati</taxon>
        <taxon>Pseudomonadota</taxon>
        <taxon>Gammaproteobacteria</taxon>
        <taxon>Alteromonadales</taxon>
        <taxon>Shewanellaceae</taxon>
        <taxon>Shewanella</taxon>
    </lineage>
</organism>
<keyword id="KW-0143">Chaperone</keyword>
<keyword id="KW-1185">Reference proteome</keyword>
<dbReference type="EMBL" id="CP000302">
    <property type="protein sequence ID" value="ABE54746.1"/>
    <property type="molecule type" value="Genomic_DNA"/>
</dbReference>
<dbReference type="RefSeq" id="WP_011495904.1">
    <property type="nucleotide sequence ID" value="NC_007954.1"/>
</dbReference>
<dbReference type="SMR" id="Q12P80"/>
<dbReference type="STRING" id="318161.Sden_1461"/>
<dbReference type="KEGG" id="sdn:Sden_1461"/>
<dbReference type="eggNOG" id="COG1076">
    <property type="taxonomic scope" value="Bacteria"/>
</dbReference>
<dbReference type="HOGENOM" id="CLU_068529_2_0_6"/>
<dbReference type="OrthoDB" id="287587at2"/>
<dbReference type="Proteomes" id="UP000001982">
    <property type="component" value="Chromosome"/>
</dbReference>
<dbReference type="GO" id="GO:1990230">
    <property type="term" value="C:iron-sulfur cluster transfer complex"/>
    <property type="evidence" value="ECO:0007669"/>
    <property type="project" value="TreeGrafter"/>
</dbReference>
<dbReference type="GO" id="GO:0001671">
    <property type="term" value="F:ATPase activator activity"/>
    <property type="evidence" value="ECO:0007669"/>
    <property type="project" value="InterPro"/>
</dbReference>
<dbReference type="GO" id="GO:0051087">
    <property type="term" value="F:protein-folding chaperone binding"/>
    <property type="evidence" value="ECO:0007669"/>
    <property type="project" value="InterPro"/>
</dbReference>
<dbReference type="GO" id="GO:0044571">
    <property type="term" value="P:[2Fe-2S] cluster assembly"/>
    <property type="evidence" value="ECO:0007669"/>
    <property type="project" value="InterPro"/>
</dbReference>
<dbReference type="GO" id="GO:0051259">
    <property type="term" value="P:protein complex oligomerization"/>
    <property type="evidence" value="ECO:0007669"/>
    <property type="project" value="InterPro"/>
</dbReference>
<dbReference type="GO" id="GO:0006457">
    <property type="term" value="P:protein folding"/>
    <property type="evidence" value="ECO:0007669"/>
    <property type="project" value="UniProtKB-UniRule"/>
</dbReference>
<dbReference type="CDD" id="cd06257">
    <property type="entry name" value="DnaJ"/>
    <property type="match status" value="1"/>
</dbReference>
<dbReference type="Gene3D" id="1.10.287.110">
    <property type="entry name" value="DnaJ domain"/>
    <property type="match status" value="1"/>
</dbReference>
<dbReference type="Gene3D" id="1.20.1280.20">
    <property type="entry name" value="HscB, C-terminal domain"/>
    <property type="match status" value="1"/>
</dbReference>
<dbReference type="HAMAP" id="MF_00682">
    <property type="entry name" value="HscB"/>
    <property type="match status" value="1"/>
</dbReference>
<dbReference type="InterPro" id="IPR001623">
    <property type="entry name" value="DnaJ_domain"/>
</dbReference>
<dbReference type="InterPro" id="IPR004640">
    <property type="entry name" value="HscB"/>
</dbReference>
<dbReference type="InterPro" id="IPR036386">
    <property type="entry name" value="HscB_C_sf"/>
</dbReference>
<dbReference type="InterPro" id="IPR009073">
    <property type="entry name" value="HscB_oligo_C"/>
</dbReference>
<dbReference type="InterPro" id="IPR036869">
    <property type="entry name" value="J_dom_sf"/>
</dbReference>
<dbReference type="NCBIfam" id="TIGR00714">
    <property type="entry name" value="hscB"/>
    <property type="match status" value="1"/>
</dbReference>
<dbReference type="NCBIfam" id="NF003449">
    <property type="entry name" value="PRK05014.1"/>
    <property type="match status" value="1"/>
</dbReference>
<dbReference type="PANTHER" id="PTHR14021">
    <property type="entry name" value="IRON-SULFUR CLUSTER CO-CHAPERONE PROTEIN HSCB"/>
    <property type="match status" value="1"/>
</dbReference>
<dbReference type="PANTHER" id="PTHR14021:SF15">
    <property type="entry name" value="IRON-SULFUR CLUSTER CO-CHAPERONE PROTEIN HSCB"/>
    <property type="match status" value="1"/>
</dbReference>
<dbReference type="Pfam" id="PF07743">
    <property type="entry name" value="HSCB_C"/>
    <property type="match status" value="1"/>
</dbReference>
<dbReference type="SMART" id="SM00271">
    <property type="entry name" value="DnaJ"/>
    <property type="match status" value="1"/>
</dbReference>
<dbReference type="SUPFAM" id="SSF46565">
    <property type="entry name" value="Chaperone J-domain"/>
    <property type="match status" value="1"/>
</dbReference>
<dbReference type="SUPFAM" id="SSF47144">
    <property type="entry name" value="HSC20 (HSCB), C-terminal oligomerisation domain"/>
    <property type="match status" value="1"/>
</dbReference>
<dbReference type="PROSITE" id="PS50076">
    <property type="entry name" value="DNAJ_2"/>
    <property type="match status" value="1"/>
</dbReference>